<keyword id="KW-0963">Cytoplasm</keyword>
<keyword id="KW-0489">Methyltransferase</keyword>
<keyword id="KW-0545">Nucleotide biosynthesis</keyword>
<keyword id="KW-1185">Reference proteome</keyword>
<keyword id="KW-0808">Transferase</keyword>
<gene>
    <name evidence="1" type="primary">thyA</name>
    <name type="ordered locus">Pnap_2772</name>
</gene>
<name>TYSY_POLNA</name>
<feature type="chain" id="PRO_1000000648" description="Thymidylate synthase">
    <location>
        <begin position="1"/>
        <end position="276"/>
    </location>
</feature>
<feature type="active site" description="Nucleophile" evidence="1">
    <location>
        <position position="151"/>
    </location>
</feature>
<feature type="binding site" description="in other chain" evidence="1">
    <location>
        <position position="26"/>
    </location>
    <ligand>
        <name>dUMP</name>
        <dbReference type="ChEBI" id="CHEBI:246422"/>
        <note>ligand shared between dimeric partners</note>
    </ligand>
</feature>
<feature type="binding site" evidence="1">
    <location>
        <position position="56"/>
    </location>
    <ligand>
        <name>(6R)-5,10-methylene-5,6,7,8-tetrahydrofolate</name>
        <dbReference type="ChEBI" id="CHEBI:15636"/>
    </ligand>
</feature>
<feature type="binding site" evidence="1">
    <location>
        <begin position="131"/>
        <end position="132"/>
    </location>
    <ligand>
        <name>dUMP</name>
        <dbReference type="ChEBI" id="CHEBI:246422"/>
        <note>ligand shared between dimeric partners</note>
    </ligand>
</feature>
<feature type="binding site" description="in other chain" evidence="1">
    <location>
        <begin position="178"/>
        <end position="181"/>
    </location>
    <ligand>
        <name>dUMP</name>
        <dbReference type="ChEBI" id="CHEBI:246422"/>
        <note>ligand shared between dimeric partners</note>
    </ligand>
</feature>
<feature type="binding site" evidence="1">
    <location>
        <position position="181"/>
    </location>
    <ligand>
        <name>(6R)-5,10-methylene-5,6,7,8-tetrahydrofolate</name>
        <dbReference type="ChEBI" id="CHEBI:15636"/>
    </ligand>
</feature>
<feature type="binding site" description="in other chain" evidence="1">
    <location>
        <position position="189"/>
    </location>
    <ligand>
        <name>dUMP</name>
        <dbReference type="ChEBI" id="CHEBI:246422"/>
        <note>ligand shared between dimeric partners</note>
    </ligand>
</feature>
<feature type="binding site" description="in other chain" evidence="1">
    <location>
        <begin position="219"/>
        <end position="221"/>
    </location>
    <ligand>
        <name>dUMP</name>
        <dbReference type="ChEBI" id="CHEBI:246422"/>
        <note>ligand shared between dimeric partners</note>
    </ligand>
</feature>
<feature type="binding site" evidence="1">
    <location>
        <position position="275"/>
    </location>
    <ligand>
        <name>(6R)-5,10-methylene-5,6,7,8-tetrahydrofolate</name>
        <dbReference type="ChEBI" id="CHEBI:15636"/>
    </ligand>
</feature>
<accession>A1VQZ6</accession>
<dbReference type="EC" id="2.1.1.45" evidence="1"/>
<dbReference type="EMBL" id="CP000529">
    <property type="protein sequence ID" value="ABM38074.1"/>
    <property type="molecule type" value="Genomic_DNA"/>
</dbReference>
<dbReference type="RefSeq" id="WP_011802151.1">
    <property type="nucleotide sequence ID" value="NC_008781.1"/>
</dbReference>
<dbReference type="SMR" id="A1VQZ6"/>
<dbReference type="STRING" id="365044.Pnap_2772"/>
<dbReference type="KEGG" id="pna:Pnap_2772"/>
<dbReference type="eggNOG" id="COG0207">
    <property type="taxonomic scope" value="Bacteria"/>
</dbReference>
<dbReference type="HOGENOM" id="CLU_021669_0_0_4"/>
<dbReference type="UniPathway" id="UPA00575"/>
<dbReference type="Proteomes" id="UP000000644">
    <property type="component" value="Chromosome"/>
</dbReference>
<dbReference type="GO" id="GO:0005829">
    <property type="term" value="C:cytosol"/>
    <property type="evidence" value="ECO:0007669"/>
    <property type="project" value="TreeGrafter"/>
</dbReference>
<dbReference type="GO" id="GO:0004799">
    <property type="term" value="F:thymidylate synthase activity"/>
    <property type="evidence" value="ECO:0007669"/>
    <property type="project" value="UniProtKB-UniRule"/>
</dbReference>
<dbReference type="GO" id="GO:0006231">
    <property type="term" value="P:dTMP biosynthetic process"/>
    <property type="evidence" value="ECO:0007669"/>
    <property type="project" value="UniProtKB-UniRule"/>
</dbReference>
<dbReference type="GO" id="GO:0006235">
    <property type="term" value="P:dTTP biosynthetic process"/>
    <property type="evidence" value="ECO:0007669"/>
    <property type="project" value="UniProtKB-UniRule"/>
</dbReference>
<dbReference type="GO" id="GO:0032259">
    <property type="term" value="P:methylation"/>
    <property type="evidence" value="ECO:0007669"/>
    <property type="project" value="UniProtKB-KW"/>
</dbReference>
<dbReference type="CDD" id="cd00351">
    <property type="entry name" value="TS_Pyrimidine_HMase"/>
    <property type="match status" value="1"/>
</dbReference>
<dbReference type="FunFam" id="3.30.572.10:FF:000013">
    <property type="entry name" value="Thymidylate synthase"/>
    <property type="match status" value="1"/>
</dbReference>
<dbReference type="Gene3D" id="3.30.572.10">
    <property type="entry name" value="Thymidylate synthase/dCMP hydroxymethylase domain"/>
    <property type="match status" value="1"/>
</dbReference>
<dbReference type="HAMAP" id="MF_00008">
    <property type="entry name" value="Thymidy_synth_bact"/>
    <property type="match status" value="1"/>
</dbReference>
<dbReference type="InterPro" id="IPR045097">
    <property type="entry name" value="Thymidate_synth/dCMP_Mease"/>
</dbReference>
<dbReference type="InterPro" id="IPR023451">
    <property type="entry name" value="Thymidate_synth/dCMP_Mease_dom"/>
</dbReference>
<dbReference type="InterPro" id="IPR036926">
    <property type="entry name" value="Thymidate_synth/dCMP_Mease_sf"/>
</dbReference>
<dbReference type="InterPro" id="IPR000398">
    <property type="entry name" value="Thymidylate_synthase"/>
</dbReference>
<dbReference type="InterPro" id="IPR020940">
    <property type="entry name" value="Thymidylate_synthase_AS"/>
</dbReference>
<dbReference type="NCBIfam" id="NF002497">
    <property type="entry name" value="PRK01827.1-3"/>
    <property type="match status" value="1"/>
</dbReference>
<dbReference type="NCBIfam" id="NF002499">
    <property type="entry name" value="PRK01827.1-5"/>
    <property type="match status" value="1"/>
</dbReference>
<dbReference type="NCBIfam" id="TIGR03284">
    <property type="entry name" value="thym_sym"/>
    <property type="match status" value="2"/>
</dbReference>
<dbReference type="PANTHER" id="PTHR11548">
    <property type="entry name" value="THYMIDYLATE SYNTHASE 1"/>
    <property type="match status" value="1"/>
</dbReference>
<dbReference type="PANTHER" id="PTHR11548:SF1">
    <property type="entry name" value="THYMIDYLATE SYNTHASE 1"/>
    <property type="match status" value="1"/>
</dbReference>
<dbReference type="Pfam" id="PF00303">
    <property type="entry name" value="Thymidylat_synt"/>
    <property type="match status" value="1"/>
</dbReference>
<dbReference type="PRINTS" id="PR00108">
    <property type="entry name" value="THYMDSNTHASE"/>
</dbReference>
<dbReference type="SUPFAM" id="SSF55831">
    <property type="entry name" value="Thymidylate synthase/dCMP hydroxymethylase"/>
    <property type="match status" value="1"/>
</dbReference>
<dbReference type="PROSITE" id="PS00091">
    <property type="entry name" value="THYMIDYLATE_SYNTHASE"/>
    <property type="match status" value="1"/>
</dbReference>
<protein>
    <recommendedName>
        <fullName evidence="1">Thymidylate synthase</fullName>
        <shortName evidence="1">TS</shortName>
        <shortName evidence="1">TSase</shortName>
        <ecNumber evidence="1">2.1.1.45</ecNumber>
    </recommendedName>
</protein>
<proteinExistence type="inferred from homology"/>
<evidence type="ECO:0000255" key="1">
    <source>
        <dbReference type="HAMAP-Rule" id="MF_00008"/>
    </source>
</evidence>
<sequence>MTRPIRHQYEDLMRLVATQGAFKADRTGTGTKSVFGHQMRFDLNEGFPLVTTKKVHLKSIIQELLWFLTGSSSNHWLTERGVTIWNEWARADGDLGPVYGVQWRSWPTPDGGHIDQIAEVIKTLKTNPDSRRIIVSAWNVADLDKMALMPCHALFQFYVAPATEAGGKGKLSCQLYQRSADIFLGVPFNIASYALLTHMVAQQCDLDVGDFIWTGGDCHIYSNHQEQVALQLGRAPFAYPLLHIRRKPDSIFDYQFEDFEFLDYQHHPAIKAPVAV</sequence>
<reference key="1">
    <citation type="journal article" date="2009" name="Environ. Microbiol.">
        <title>The genome of Polaromonas naphthalenivorans strain CJ2, isolated from coal tar-contaminated sediment, reveals physiological and metabolic versatility and evolution through extensive horizontal gene transfer.</title>
        <authorList>
            <person name="Yagi J.M."/>
            <person name="Sims D."/>
            <person name="Brettin T."/>
            <person name="Bruce D."/>
            <person name="Madsen E.L."/>
        </authorList>
    </citation>
    <scope>NUCLEOTIDE SEQUENCE [LARGE SCALE GENOMIC DNA]</scope>
    <source>
        <strain>CJ2</strain>
    </source>
</reference>
<organism>
    <name type="scientific">Polaromonas naphthalenivorans (strain CJ2)</name>
    <dbReference type="NCBI Taxonomy" id="365044"/>
    <lineage>
        <taxon>Bacteria</taxon>
        <taxon>Pseudomonadati</taxon>
        <taxon>Pseudomonadota</taxon>
        <taxon>Betaproteobacteria</taxon>
        <taxon>Burkholderiales</taxon>
        <taxon>Comamonadaceae</taxon>
        <taxon>Polaromonas</taxon>
    </lineage>
</organism>
<comment type="function">
    <text evidence="1">Catalyzes the reductive methylation of 2'-deoxyuridine-5'-monophosphate (dUMP) to 2'-deoxythymidine-5'-monophosphate (dTMP) while utilizing 5,10-methylenetetrahydrofolate (mTHF) as the methyl donor and reductant in the reaction, yielding dihydrofolate (DHF) as a by-product. This enzymatic reaction provides an intracellular de novo source of dTMP, an essential precursor for DNA biosynthesis.</text>
</comment>
<comment type="catalytic activity">
    <reaction evidence="1">
        <text>dUMP + (6R)-5,10-methylene-5,6,7,8-tetrahydrofolate = 7,8-dihydrofolate + dTMP</text>
        <dbReference type="Rhea" id="RHEA:12104"/>
        <dbReference type="ChEBI" id="CHEBI:15636"/>
        <dbReference type="ChEBI" id="CHEBI:57451"/>
        <dbReference type="ChEBI" id="CHEBI:63528"/>
        <dbReference type="ChEBI" id="CHEBI:246422"/>
        <dbReference type="EC" id="2.1.1.45"/>
    </reaction>
</comment>
<comment type="pathway">
    <text evidence="1">Pyrimidine metabolism; dTTP biosynthesis.</text>
</comment>
<comment type="subunit">
    <text evidence="1">Homodimer.</text>
</comment>
<comment type="subcellular location">
    <subcellularLocation>
        <location evidence="1">Cytoplasm</location>
    </subcellularLocation>
</comment>
<comment type="similarity">
    <text evidence="1">Belongs to the thymidylate synthase family. Bacterial-type ThyA subfamily.</text>
</comment>